<dbReference type="EMBL" id="CP001113">
    <property type="protein sequence ID" value="ACF63005.1"/>
    <property type="molecule type" value="Genomic_DNA"/>
</dbReference>
<dbReference type="RefSeq" id="WP_000429386.1">
    <property type="nucleotide sequence ID" value="NZ_CCMR01000001.1"/>
</dbReference>
<dbReference type="SMR" id="B4SYD6"/>
<dbReference type="GeneID" id="98390858"/>
<dbReference type="KEGG" id="see:SNSL254_A4151"/>
<dbReference type="HOGENOM" id="CLU_148047_1_0_6"/>
<dbReference type="Proteomes" id="UP000008824">
    <property type="component" value="Chromosome"/>
</dbReference>
<dbReference type="GO" id="GO:0005886">
    <property type="term" value="C:plasma membrane"/>
    <property type="evidence" value="ECO:0007669"/>
    <property type="project" value="UniProtKB-SubCell"/>
</dbReference>
<dbReference type="GO" id="GO:0045259">
    <property type="term" value="C:proton-transporting ATP synthase complex"/>
    <property type="evidence" value="ECO:0007669"/>
    <property type="project" value="UniProtKB-KW"/>
</dbReference>
<dbReference type="GO" id="GO:0033177">
    <property type="term" value="C:proton-transporting two-sector ATPase complex, proton-transporting domain"/>
    <property type="evidence" value="ECO:0007669"/>
    <property type="project" value="InterPro"/>
</dbReference>
<dbReference type="GO" id="GO:0008289">
    <property type="term" value="F:lipid binding"/>
    <property type="evidence" value="ECO:0007669"/>
    <property type="project" value="UniProtKB-KW"/>
</dbReference>
<dbReference type="GO" id="GO:0046933">
    <property type="term" value="F:proton-transporting ATP synthase activity, rotational mechanism"/>
    <property type="evidence" value="ECO:0007669"/>
    <property type="project" value="UniProtKB-UniRule"/>
</dbReference>
<dbReference type="CDD" id="cd18185">
    <property type="entry name" value="ATP-synt_Fo_c_ATPE"/>
    <property type="match status" value="1"/>
</dbReference>
<dbReference type="FunFam" id="1.20.20.10:FF:000002">
    <property type="entry name" value="ATP synthase subunit c"/>
    <property type="match status" value="1"/>
</dbReference>
<dbReference type="Gene3D" id="1.20.20.10">
    <property type="entry name" value="F1F0 ATP synthase subunit C"/>
    <property type="match status" value="1"/>
</dbReference>
<dbReference type="HAMAP" id="MF_01396">
    <property type="entry name" value="ATP_synth_c_bact"/>
    <property type="match status" value="1"/>
</dbReference>
<dbReference type="InterPro" id="IPR005953">
    <property type="entry name" value="ATP_synth_csu_bac/chlpt"/>
</dbReference>
<dbReference type="InterPro" id="IPR000454">
    <property type="entry name" value="ATP_synth_F0_csu"/>
</dbReference>
<dbReference type="InterPro" id="IPR020537">
    <property type="entry name" value="ATP_synth_F0_csu_DDCD_BS"/>
</dbReference>
<dbReference type="InterPro" id="IPR038662">
    <property type="entry name" value="ATP_synth_F0_csu_sf"/>
</dbReference>
<dbReference type="InterPro" id="IPR002379">
    <property type="entry name" value="ATPase_proteolipid_c-like_dom"/>
</dbReference>
<dbReference type="InterPro" id="IPR035921">
    <property type="entry name" value="F/V-ATP_Csub_sf"/>
</dbReference>
<dbReference type="NCBIfam" id="TIGR01260">
    <property type="entry name" value="ATP_synt_c"/>
    <property type="match status" value="1"/>
</dbReference>
<dbReference type="NCBIfam" id="NF005363">
    <property type="entry name" value="PRK06876.1"/>
    <property type="match status" value="1"/>
</dbReference>
<dbReference type="Pfam" id="PF00137">
    <property type="entry name" value="ATP-synt_C"/>
    <property type="match status" value="1"/>
</dbReference>
<dbReference type="PRINTS" id="PR00124">
    <property type="entry name" value="ATPASEC"/>
</dbReference>
<dbReference type="SUPFAM" id="SSF81333">
    <property type="entry name" value="F1F0 ATP synthase subunit C"/>
    <property type="match status" value="1"/>
</dbReference>
<dbReference type="PROSITE" id="PS00605">
    <property type="entry name" value="ATPASE_C"/>
    <property type="match status" value="1"/>
</dbReference>
<feature type="chain" id="PRO_1000184460" description="ATP synthase subunit c">
    <location>
        <begin position="1"/>
        <end position="79"/>
    </location>
</feature>
<feature type="transmembrane region" description="Helical" evidence="1">
    <location>
        <begin position="11"/>
        <end position="31"/>
    </location>
</feature>
<feature type="transmembrane region" description="Helical" evidence="1">
    <location>
        <begin position="53"/>
        <end position="73"/>
    </location>
</feature>
<feature type="site" description="Reversibly protonated during proton transport" evidence="1">
    <location>
        <position position="61"/>
    </location>
</feature>
<proteinExistence type="inferred from homology"/>
<protein>
    <recommendedName>
        <fullName evidence="1">ATP synthase subunit c</fullName>
    </recommendedName>
    <alternativeName>
        <fullName evidence="1">ATP synthase F(0) sector subunit c</fullName>
    </alternativeName>
    <alternativeName>
        <fullName evidence="1">F-type ATPase subunit c</fullName>
        <shortName evidence="1">F-ATPase subunit c</shortName>
    </alternativeName>
    <alternativeName>
        <fullName evidence="1">Lipid-binding protein</fullName>
    </alternativeName>
</protein>
<evidence type="ECO:0000255" key="1">
    <source>
        <dbReference type="HAMAP-Rule" id="MF_01396"/>
    </source>
</evidence>
<keyword id="KW-0066">ATP synthesis</keyword>
<keyword id="KW-0997">Cell inner membrane</keyword>
<keyword id="KW-1003">Cell membrane</keyword>
<keyword id="KW-0138">CF(0)</keyword>
<keyword id="KW-0375">Hydrogen ion transport</keyword>
<keyword id="KW-0406">Ion transport</keyword>
<keyword id="KW-0446">Lipid-binding</keyword>
<keyword id="KW-0472">Membrane</keyword>
<keyword id="KW-0812">Transmembrane</keyword>
<keyword id="KW-1133">Transmembrane helix</keyword>
<keyword id="KW-0813">Transport</keyword>
<sequence length="79" mass="8256">MENLNMDLLYMAAAVMMGLAAIGAAIGIGILGGKFLEGAARQPDLIPLLRTQFFIVMGLVDAIPMIAVGLGLYVMFAVA</sequence>
<reference key="1">
    <citation type="journal article" date="2011" name="J. Bacteriol.">
        <title>Comparative genomics of 28 Salmonella enterica isolates: evidence for CRISPR-mediated adaptive sublineage evolution.</title>
        <authorList>
            <person name="Fricke W.F."/>
            <person name="Mammel M.K."/>
            <person name="McDermott P.F."/>
            <person name="Tartera C."/>
            <person name="White D.G."/>
            <person name="Leclerc J.E."/>
            <person name="Ravel J."/>
            <person name="Cebula T.A."/>
        </authorList>
    </citation>
    <scope>NUCLEOTIDE SEQUENCE [LARGE SCALE GENOMIC DNA]</scope>
    <source>
        <strain>SL254</strain>
    </source>
</reference>
<comment type="function">
    <text evidence="1">F(1)F(0) ATP synthase produces ATP from ADP in the presence of a proton or sodium gradient. F-type ATPases consist of two structural domains, F(1) containing the extramembraneous catalytic core and F(0) containing the membrane proton channel, linked together by a central stalk and a peripheral stalk. During catalysis, ATP synthesis in the catalytic domain of F(1) is coupled via a rotary mechanism of the central stalk subunits to proton translocation.</text>
</comment>
<comment type="function">
    <text evidence="1">Key component of the F(0) channel; it plays a direct role in translocation across the membrane. A homomeric c-ring of between 10-14 subunits forms the central stalk rotor element with the F(1) delta and epsilon subunits.</text>
</comment>
<comment type="subunit">
    <text evidence="1">F-type ATPases have 2 components, F(1) - the catalytic core - and F(0) - the membrane proton channel. F(1) has five subunits: alpha(3), beta(3), gamma(1), delta(1), epsilon(1). F(0) has three main subunits: a(1), b(2) and c(10-14). The alpha and beta chains form an alternating ring which encloses part of the gamma chain. F(1) is attached to F(0) by a central stalk formed by the gamma and epsilon chains, while a peripheral stalk is formed by the delta and b chains.</text>
</comment>
<comment type="subcellular location">
    <subcellularLocation>
        <location evidence="1">Cell inner membrane</location>
        <topology evidence="1">Multi-pass membrane protein</topology>
    </subcellularLocation>
</comment>
<comment type="similarity">
    <text evidence="1">Belongs to the ATPase C chain family.</text>
</comment>
<organism>
    <name type="scientific">Salmonella newport (strain SL254)</name>
    <dbReference type="NCBI Taxonomy" id="423368"/>
    <lineage>
        <taxon>Bacteria</taxon>
        <taxon>Pseudomonadati</taxon>
        <taxon>Pseudomonadota</taxon>
        <taxon>Gammaproteobacteria</taxon>
        <taxon>Enterobacterales</taxon>
        <taxon>Enterobacteriaceae</taxon>
        <taxon>Salmonella</taxon>
    </lineage>
</organism>
<accession>B4SYD6</accession>
<gene>
    <name evidence="1" type="primary">atpE</name>
    <name type="ordered locus">SNSL254_A4151</name>
</gene>
<name>ATPL_SALNS</name>